<protein>
    <recommendedName>
        <fullName evidence="1">Small ribosomal subunit protein uS14</fullName>
    </recommendedName>
    <alternativeName>
        <fullName evidence="3">30S ribosomal protein S14</fullName>
    </alternativeName>
</protein>
<comment type="function">
    <text evidence="1">Binds 16S rRNA, required for the assembly of 30S particles and may also be responsible for determining the conformation of the 16S rRNA at the A site.</text>
</comment>
<comment type="subunit">
    <text evidence="1">Part of the 30S ribosomal subunit. Contacts proteins S3 and S10.</text>
</comment>
<comment type="similarity">
    <text evidence="1">Belongs to the universal ribosomal protein uS14 family.</text>
</comment>
<evidence type="ECO:0000255" key="1">
    <source>
        <dbReference type="HAMAP-Rule" id="MF_00537"/>
    </source>
</evidence>
<evidence type="ECO:0000256" key="2">
    <source>
        <dbReference type="SAM" id="MobiDB-lite"/>
    </source>
</evidence>
<evidence type="ECO:0000305" key="3"/>
<sequence>MAKQSMKAREVKRVALADKYFAKRAELKAIISDVNASDEDRWNAVLKLQSLPRDSSPSRQRNRCRQTGRPHGYVGKFGLSRIKLREAAMRGEVPGLKKASW</sequence>
<feature type="chain" id="PRO_1000128557" description="Small ribosomal subunit protein uS14">
    <location>
        <begin position="1"/>
        <end position="101"/>
    </location>
</feature>
<feature type="region of interest" description="Disordered" evidence="2">
    <location>
        <begin position="51"/>
        <end position="70"/>
    </location>
</feature>
<keyword id="KW-1185">Reference proteome</keyword>
<keyword id="KW-0687">Ribonucleoprotein</keyword>
<keyword id="KW-0689">Ribosomal protein</keyword>
<keyword id="KW-0694">RNA-binding</keyword>
<keyword id="KW-0699">rRNA-binding</keyword>
<proteinExistence type="inferred from homology"/>
<organism>
    <name type="scientific">Salmonella arizonae (strain ATCC BAA-731 / CDC346-86 / RSK2980)</name>
    <dbReference type="NCBI Taxonomy" id="41514"/>
    <lineage>
        <taxon>Bacteria</taxon>
        <taxon>Pseudomonadati</taxon>
        <taxon>Pseudomonadota</taxon>
        <taxon>Gammaproteobacteria</taxon>
        <taxon>Enterobacterales</taxon>
        <taxon>Enterobacteriaceae</taxon>
        <taxon>Salmonella</taxon>
    </lineage>
</organism>
<dbReference type="EMBL" id="CP000880">
    <property type="protein sequence ID" value="ABX23991.1"/>
    <property type="molecule type" value="Genomic_DNA"/>
</dbReference>
<dbReference type="SMR" id="A9MN61"/>
<dbReference type="STRING" id="41514.SARI_04202"/>
<dbReference type="KEGG" id="ses:SARI_04202"/>
<dbReference type="HOGENOM" id="CLU_139869_0_1_6"/>
<dbReference type="Proteomes" id="UP000002084">
    <property type="component" value="Chromosome"/>
</dbReference>
<dbReference type="GO" id="GO:0005737">
    <property type="term" value="C:cytoplasm"/>
    <property type="evidence" value="ECO:0007669"/>
    <property type="project" value="UniProtKB-ARBA"/>
</dbReference>
<dbReference type="GO" id="GO:0015935">
    <property type="term" value="C:small ribosomal subunit"/>
    <property type="evidence" value="ECO:0007669"/>
    <property type="project" value="TreeGrafter"/>
</dbReference>
<dbReference type="GO" id="GO:0019843">
    <property type="term" value="F:rRNA binding"/>
    <property type="evidence" value="ECO:0007669"/>
    <property type="project" value="UniProtKB-UniRule"/>
</dbReference>
<dbReference type="GO" id="GO:0003735">
    <property type="term" value="F:structural constituent of ribosome"/>
    <property type="evidence" value="ECO:0007669"/>
    <property type="project" value="InterPro"/>
</dbReference>
<dbReference type="GO" id="GO:0006412">
    <property type="term" value="P:translation"/>
    <property type="evidence" value="ECO:0007669"/>
    <property type="project" value="UniProtKB-UniRule"/>
</dbReference>
<dbReference type="FunFam" id="1.10.287.1480:FF:000001">
    <property type="entry name" value="30S ribosomal protein S14"/>
    <property type="match status" value="1"/>
</dbReference>
<dbReference type="Gene3D" id="1.10.287.1480">
    <property type="match status" value="1"/>
</dbReference>
<dbReference type="HAMAP" id="MF_00537">
    <property type="entry name" value="Ribosomal_uS14_1"/>
    <property type="match status" value="1"/>
</dbReference>
<dbReference type="InterPro" id="IPR001209">
    <property type="entry name" value="Ribosomal_uS14"/>
</dbReference>
<dbReference type="InterPro" id="IPR023036">
    <property type="entry name" value="Ribosomal_uS14_bac/plastid"/>
</dbReference>
<dbReference type="InterPro" id="IPR018271">
    <property type="entry name" value="Ribosomal_uS14_CS"/>
</dbReference>
<dbReference type="NCBIfam" id="NF006477">
    <property type="entry name" value="PRK08881.1"/>
    <property type="match status" value="1"/>
</dbReference>
<dbReference type="PANTHER" id="PTHR19836">
    <property type="entry name" value="30S RIBOSOMAL PROTEIN S14"/>
    <property type="match status" value="1"/>
</dbReference>
<dbReference type="PANTHER" id="PTHR19836:SF19">
    <property type="entry name" value="SMALL RIBOSOMAL SUBUNIT PROTEIN US14M"/>
    <property type="match status" value="1"/>
</dbReference>
<dbReference type="Pfam" id="PF00253">
    <property type="entry name" value="Ribosomal_S14"/>
    <property type="match status" value="1"/>
</dbReference>
<dbReference type="SUPFAM" id="SSF57716">
    <property type="entry name" value="Glucocorticoid receptor-like (DNA-binding domain)"/>
    <property type="match status" value="1"/>
</dbReference>
<dbReference type="PROSITE" id="PS00527">
    <property type="entry name" value="RIBOSOMAL_S14"/>
    <property type="match status" value="1"/>
</dbReference>
<reference key="1">
    <citation type="submission" date="2007-11" db="EMBL/GenBank/DDBJ databases">
        <authorList>
            <consortium name="The Salmonella enterica serovar Arizonae Genome Sequencing Project"/>
            <person name="McClelland M."/>
            <person name="Sanderson E.K."/>
            <person name="Porwollik S."/>
            <person name="Spieth J."/>
            <person name="Clifton W.S."/>
            <person name="Fulton R."/>
            <person name="Chunyan W."/>
            <person name="Wollam A."/>
            <person name="Shah N."/>
            <person name="Pepin K."/>
            <person name="Bhonagiri V."/>
            <person name="Nash W."/>
            <person name="Johnson M."/>
            <person name="Thiruvilangam P."/>
            <person name="Wilson R."/>
        </authorList>
    </citation>
    <scope>NUCLEOTIDE SEQUENCE [LARGE SCALE GENOMIC DNA]</scope>
    <source>
        <strain>ATCC BAA-731 / CDC346-86 / RSK2980</strain>
    </source>
</reference>
<accession>A9MN61</accession>
<gene>
    <name evidence="1" type="primary">rpsN</name>
    <name type="ordered locus">SARI_04202</name>
</gene>
<name>RS14_SALAR</name>